<comment type="function">
    <text evidence="1">Transcription regulator that activates transcription by stimulating RNA polymerase (RNAP) recycling in case of stress conditions such as supercoiled DNA or high salt concentrations. Probably acts by releasing the RNAP, when it is trapped or immobilized on tightly supercoiled DNA. Does not activate transcription on linear DNA. Probably not involved in DNA repair.</text>
</comment>
<comment type="subunit">
    <text evidence="1">Interacts with the RNAP. Has a higher affinity for the core RNAP than for the holoenzyme. Its ATPase activity is stimulated by binding to RNAP.</text>
</comment>
<comment type="similarity">
    <text evidence="1">Belongs to the SNF2/RAD54 helicase family. RapA subfamily.</text>
</comment>
<reference key="1">
    <citation type="journal article" date="2011" name="J. Bacteriol.">
        <title>Comparative genomics of 28 Salmonella enterica isolates: evidence for CRISPR-mediated adaptive sublineage evolution.</title>
        <authorList>
            <person name="Fricke W.F."/>
            <person name="Mammel M.K."/>
            <person name="McDermott P.F."/>
            <person name="Tartera C."/>
            <person name="White D.G."/>
            <person name="Leclerc J.E."/>
            <person name="Ravel J."/>
            <person name="Cebula T.A."/>
        </authorList>
    </citation>
    <scope>NUCLEOTIDE SEQUENCE [LARGE SCALE GENOMIC DNA]</scope>
    <source>
        <strain>CT_02021853</strain>
    </source>
</reference>
<protein>
    <recommendedName>
        <fullName evidence="1">RNA polymerase-associated protein RapA</fullName>
        <ecNumber evidence="1">3.6.4.-</ecNumber>
    </recommendedName>
    <alternativeName>
        <fullName evidence="1">ATP-dependent helicase HepA</fullName>
    </alternativeName>
</protein>
<dbReference type="EC" id="3.6.4.-" evidence="1"/>
<dbReference type="EMBL" id="CP001144">
    <property type="protein sequence ID" value="ACH77175.1"/>
    <property type="molecule type" value="Genomic_DNA"/>
</dbReference>
<dbReference type="RefSeq" id="WP_001116966.1">
    <property type="nucleotide sequence ID" value="NC_011205.1"/>
</dbReference>
<dbReference type="SMR" id="B5FI41"/>
<dbReference type="KEGG" id="sed:SeD_A0101"/>
<dbReference type="HOGENOM" id="CLU_011520_0_0_6"/>
<dbReference type="Proteomes" id="UP000008322">
    <property type="component" value="Chromosome"/>
</dbReference>
<dbReference type="GO" id="GO:0005524">
    <property type="term" value="F:ATP binding"/>
    <property type="evidence" value="ECO:0007669"/>
    <property type="project" value="UniProtKB-UniRule"/>
</dbReference>
<dbReference type="GO" id="GO:0003677">
    <property type="term" value="F:DNA binding"/>
    <property type="evidence" value="ECO:0007669"/>
    <property type="project" value="UniProtKB-KW"/>
</dbReference>
<dbReference type="GO" id="GO:0004386">
    <property type="term" value="F:helicase activity"/>
    <property type="evidence" value="ECO:0007669"/>
    <property type="project" value="UniProtKB-UniRule"/>
</dbReference>
<dbReference type="GO" id="GO:0016817">
    <property type="term" value="F:hydrolase activity, acting on acid anhydrides"/>
    <property type="evidence" value="ECO:0007669"/>
    <property type="project" value="InterPro"/>
</dbReference>
<dbReference type="GO" id="GO:0006355">
    <property type="term" value="P:regulation of DNA-templated transcription"/>
    <property type="evidence" value="ECO:0007669"/>
    <property type="project" value="UniProtKB-UniRule"/>
</dbReference>
<dbReference type="CDD" id="cd18011">
    <property type="entry name" value="DEXDc_RapA"/>
    <property type="match status" value="1"/>
</dbReference>
<dbReference type="CDD" id="cd18793">
    <property type="entry name" value="SF2_C_SNF"/>
    <property type="match status" value="1"/>
</dbReference>
<dbReference type="FunFam" id="2.30.30.140:FF:000020">
    <property type="entry name" value="RNA polymerase-associated protein RapA"/>
    <property type="match status" value="1"/>
</dbReference>
<dbReference type="FunFam" id="3.30.360.80:FF:000001">
    <property type="entry name" value="RNA polymerase-associated protein RapA"/>
    <property type="match status" value="1"/>
</dbReference>
<dbReference type="FunFam" id="3.40.50.10810:FF:000012">
    <property type="entry name" value="RNA polymerase-associated protein RapA"/>
    <property type="match status" value="1"/>
</dbReference>
<dbReference type="FunFam" id="3.40.50.300:FF:000350">
    <property type="entry name" value="RNA polymerase-associated protein RapA"/>
    <property type="match status" value="1"/>
</dbReference>
<dbReference type="Gene3D" id="2.30.30.140">
    <property type="match status" value="1"/>
</dbReference>
<dbReference type="Gene3D" id="2.30.30.930">
    <property type="match status" value="1"/>
</dbReference>
<dbReference type="Gene3D" id="3.30.360.80">
    <property type="match status" value="1"/>
</dbReference>
<dbReference type="Gene3D" id="6.10.140.1500">
    <property type="match status" value="1"/>
</dbReference>
<dbReference type="Gene3D" id="6.10.140.2230">
    <property type="match status" value="1"/>
</dbReference>
<dbReference type="Gene3D" id="3.40.50.300">
    <property type="entry name" value="P-loop containing nucleotide triphosphate hydrolases"/>
    <property type="match status" value="1"/>
</dbReference>
<dbReference type="Gene3D" id="3.40.50.10810">
    <property type="entry name" value="Tandem AAA-ATPase domain"/>
    <property type="match status" value="1"/>
</dbReference>
<dbReference type="HAMAP" id="MF_01821">
    <property type="entry name" value="Helicase_RapA"/>
    <property type="match status" value="1"/>
</dbReference>
<dbReference type="InterPro" id="IPR014001">
    <property type="entry name" value="Helicase_ATP-bd"/>
</dbReference>
<dbReference type="InterPro" id="IPR001650">
    <property type="entry name" value="Helicase_C-like"/>
</dbReference>
<dbReference type="InterPro" id="IPR023949">
    <property type="entry name" value="Helicase_RapA"/>
</dbReference>
<dbReference type="InterPro" id="IPR027417">
    <property type="entry name" value="P-loop_NTPase"/>
</dbReference>
<dbReference type="InterPro" id="IPR022737">
    <property type="entry name" value="RapA_C"/>
</dbReference>
<dbReference type="InterPro" id="IPR038718">
    <property type="entry name" value="SNF2-like_sf"/>
</dbReference>
<dbReference type="InterPro" id="IPR049730">
    <property type="entry name" value="SNF2/RAD54-like_C"/>
</dbReference>
<dbReference type="InterPro" id="IPR000330">
    <property type="entry name" value="SNF2_N"/>
</dbReference>
<dbReference type="InterPro" id="IPR040765">
    <property type="entry name" value="Tudor_1_RapA"/>
</dbReference>
<dbReference type="InterPro" id="IPR040766">
    <property type="entry name" value="Tudor_2_RapA"/>
</dbReference>
<dbReference type="NCBIfam" id="NF003426">
    <property type="entry name" value="PRK04914.1"/>
    <property type="match status" value="1"/>
</dbReference>
<dbReference type="PANTHER" id="PTHR45766">
    <property type="entry name" value="DNA ANNEALING HELICASE AND ENDONUCLEASE ZRANB3 FAMILY MEMBER"/>
    <property type="match status" value="1"/>
</dbReference>
<dbReference type="PANTHER" id="PTHR45766:SF6">
    <property type="entry name" value="SWI_SNF-RELATED MATRIX-ASSOCIATED ACTIN-DEPENDENT REGULATOR OF CHROMATIN SUBFAMILY A-LIKE PROTEIN 1"/>
    <property type="match status" value="1"/>
</dbReference>
<dbReference type="Pfam" id="PF00271">
    <property type="entry name" value="Helicase_C"/>
    <property type="match status" value="1"/>
</dbReference>
<dbReference type="Pfam" id="PF12137">
    <property type="entry name" value="RapA_C"/>
    <property type="match status" value="1"/>
</dbReference>
<dbReference type="Pfam" id="PF00176">
    <property type="entry name" value="SNF2-rel_dom"/>
    <property type="match status" value="1"/>
</dbReference>
<dbReference type="Pfam" id="PF18339">
    <property type="entry name" value="Tudor_1_RapA"/>
    <property type="match status" value="1"/>
</dbReference>
<dbReference type="Pfam" id="PF18337">
    <property type="entry name" value="Tudor_RapA"/>
    <property type="match status" value="1"/>
</dbReference>
<dbReference type="SMART" id="SM00487">
    <property type="entry name" value="DEXDc"/>
    <property type="match status" value="1"/>
</dbReference>
<dbReference type="SMART" id="SM00490">
    <property type="entry name" value="HELICc"/>
    <property type="match status" value="1"/>
</dbReference>
<dbReference type="SUPFAM" id="SSF52540">
    <property type="entry name" value="P-loop containing nucleoside triphosphate hydrolases"/>
    <property type="match status" value="2"/>
</dbReference>
<dbReference type="PROSITE" id="PS51192">
    <property type="entry name" value="HELICASE_ATP_BIND_1"/>
    <property type="match status" value="1"/>
</dbReference>
<dbReference type="PROSITE" id="PS51194">
    <property type="entry name" value="HELICASE_CTER"/>
    <property type="match status" value="1"/>
</dbReference>
<sequence>MPFTLGQRWISDTESELGLGTVVAMDARTVTLLFPSTGENRLYARSDSPVTRVMFNPGDTITSHEGWQLHIDEVKEENGLLVYVGTRLDTEETNVTLREVLLDSKLVFSKPQDRLFAGQIDRMDRFALRYRARKFQSEQYRMPYSGLRGQRTNLIPHQLNIAHDVGRRHAPRVLLADEVGLGKTIEAGMILHQQLLSGAAERVLIIVPETLQHQWLVEMLRRFNLRFALFDDERYTEAQHDAYNPFETEQLVICSLDFARRNKQRLEHLCDAEWDLLVVDEAHHLVWSTDAPSREYMAIEQLAERVPGVLLLTATPEQLGMESHFARLRLLDPNRFHDFEQFVEEQKNYRPVADAVAMLLAGNKLSNDELNRLGDLIGEQDIEPLLQAANSDRDDAQAARDELVSMLMDRHGTSRVLFRNTRNGVKGFPKRELHTVKLPLPTQYQTAIKVSGIMGARKSAEDRARDMLYPEQIYQEFEGDTGTWWNFDPRVEWLMGYLTSHRSQKVLVICAKATTALQLEQVLREREGIRAAVFHEGMSIIERDRAAAWFAEEDTGAQVLLCSEIGSEGRNFQFASNLVMFDLPFNPDLLEQRIGRLDRIGQAHDIQIHVPYLEKTAQSVLVRWYHEGLDAFEHTCPTGRAIYDSAYASLINYLAAPEETDGFDDLIKSCREQHEALKAQLEQGRDRLLEIHSNGGEKAQQLAQSIEEQDDDTNLIAFAMNLFDIVGINQDDRGDNLIVLTPSDHMLVPDFPGLPEDGCTITFERDVALSREDAQFITWEHPLIRNGLDLILSGDTGSSTISLLKNKALPVGTLLVELVYVVEAQAPKQLQLNRFLPPTPVRMLLDKNGNNLAAQVEFETFNRQLSAVNRHTGSKLVNAVQQDVHAILQLGETQIEKSARALIDNARREADEKLSGELSRLEALRAVNPNIRDDELAAIDSNRQQVLESLNQAGWRLDALRLIVVTHQ</sequence>
<gene>
    <name evidence="1" type="primary">rapA</name>
    <name type="ordered locus">SeD_A0101</name>
</gene>
<organism>
    <name type="scientific">Salmonella dublin (strain CT_02021853)</name>
    <dbReference type="NCBI Taxonomy" id="439851"/>
    <lineage>
        <taxon>Bacteria</taxon>
        <taxon>Pseudomonadati</taxon>
        <taxon>Pseudomonadota</taxon>
        <taxon>Gammaproteobacteria</taxon>
        <taxon>Enterobacterales</taxon>
        <taxon>Enterobacteriaceae</taxon>
        <taxon>Salmonella</taxon>
    </lineage>
</organism>
<proteinExistence type="inferred from homology"/>
<accession>B5FI41</accession>
<evidence type="ECO:0000255" key="1">
    <source>
        <dbReference type="HAMAP-Rule" id="MF_01821"/>
    </source>
</evidence>
<keyword id="KW-0010">Activator</keyword>
<keyword id="KW-0067">ATP-binding</keyword>
<keyword id="KW-0238">DNA-binding</keyword>
<keyword id="KW-0347">Helicase</keyword>
<keyword id="KW-0378">Hydrolase</keyword>
<keyword id="KW-0547">Nucleotide-binding</keyword>
<keyword id="KW-0804">Transcription</keyword>
<keyword id="KW-0805">Transcription regulation</keyword>
<feature type="chain" id="PRO_1000188184" description="RNA polymerase-associated protein RapA">
    <location>
        <begin position="1"/>
        <end position="968"/>
    </location>
</feature>
<feature type="domain" description="Helicase ATP-binding" evidence="1">
    <location>
        <begin position="164"/>
        <end position="334"/>
    </location>
</feature>
<feature type="domain" description="Helicase C-terminal" evidence="1">
    <location>
        <begin position="490"/>
        <end position="685"/>
    </location>
</feature>
<feature type="short sequence motif" description="DEAH box">
    <location>
        <begin position="280"/>
        <end position="283"/>
    </location>
</feature>
<feature type="binding site" evidence="1">
    <location>
        <begin position="177"/>
        <end position="184"/>
    </location>
    <ligand>
        <name>ATP</name>
        <dbReference type="ChEBI" id="CHEBI:30616"/>
    </ligand>
</feature>
<name>RAPA_SALDC</name>